<evidence type="ECO:0000255" key="1">
    <source>
        <dbReference type="HAMAP-Rule" id="MF_00052"/>
    </source>
</evidence>
<evidence type="ECO:0000255" key="2">
    <source>
        <dbReference type="PROSITE-ProRule" id="PRU01319"/>
    </source>
</evidence>
<protein>
    <recommendedName>
        <fullName evidence="1">Ribonuclease HII</fullName>
        <shortName evidence="1">RNase HII</shortName>
        <ecNumber evidence="1">3.1.26.4</ecNumber>
    </recommendedName>
</protein>
<comment type="function">
    <text evidence="1">Endonuclease that specifically degrades the RNA of RNA-DNA hybrids.</text>
</comment>
<comment type="catalytic activity">
    <reaction evidence="1">
        <text>Endonucleolytic cleavage to 5'-phosphomonoester.</text>
        <dbReference type="EC" id="3.1.26.4"/>
    </reaction>
</comment>
<comment type="cofactor">
    <cofactor evidence="1">
        <name>Mn(2+)</name>
        <dbReference type="ChEBI" id="CHEBI:29035"/>
    </cofactor>
    <cofactor evidence="1">
        <name>Mg(2+)</name>
        <dbReference type="ChEBI" id="CHEBI:18420"/>
    </cofactor>
    <text evidence="1">Manganese or magnesium. Binds 1 divalent metal ion per monomer in the absence of substrate. May bind a second metal ion after substrate binding.</text>
</comment>
<comment type="subcellular location">
    <subcellularLocation>
        <location evidence="1">Cytoplasm</location>
    </subcellularLocation>
</comment>
<comment type="similarity">
    <text evidence="1">Belongs to the RNase HII family.</text>
</comment>
<accession>A4IM80</accession>
<gene>
    <name evidence="1" type="primary">rnhB</name>
    <name type="ordered locus">GTNG_1058</name>
</gene>
<name>RNH2_GEOTN</name>
<reference key="1">
    <citation type="journal article" date="2007" name="Proc. Natl. Acad. Sci. U.S.A.">
        <title>Genome and proteome of long-chain alkane degrading Geobacillus thermodenitrificans NG80-2 isolated from a deep-subsurface oil reservoir.</title>
        <authorList>
            <person name="Feng L."/>
            <person name="Wang W."/>
            <person name="Cheng J."/>
            <person name="Ren Y."/>
            <person name="Zhao G."/>
            <person name="Gao C."/>
            <person name="Tang Y."/>
            <person name="Liu X."/>
            <person name="Han W."/>
            <person name="Peng X."/>
            <person name="Liu R."/>
            <person name="Wang L."/>
        </authorList>
    </citation>
    <scope>NUCLEOTIDE SEQUENCE [LARGE SCALE GENOMIC DNA]</scope>
    <source>
        <strain>NG80-2</strain>
    </source>
</reference>
<feature type="chain" id="PRO_1000031147" description="Ribonuclease HII">
    <location>
        <begin position="1"/>
        <end position="259"/>
    </location>
</feature>
<feature type="domain" description="RNase H type-2" evidence="2">
    <location>
        <begin position="72"/>
        <end position="259"/>
    </location>
</feature>
<feature type="binding site" evidence="1">
    <location>
        <position position="78"/>
    </location>
    <ligand>
        <name>a divalent metal cation</name>
        <dbReference type="ChEBI" id="CHEBI:60240"/>
    </ligand>
</feature>
<feature type="binding site" evidence="1">
    <location>
        <position position="79"/>
    </location>
    <ligand>
        <name>a divalent metal cation</name>
        <dbReference type="ChEBI" id="CHEBI:60240"/>
    </ligand>
</feature>
<feature type="binding site" evidence="1">
    <location>
        <position position="170"/>
    </location>
    <ligand>
        <name>a divalent metal cation</name>
        <dbReference type="ChEBI" id="CHEBI:60240"/>
    </ligand>
</feature>
<organism>
    <name type="scientific">Geobacillus thermodenitrificans (strain NG80-2)</name>
    <dbReference type="NCBI Taxonomy" id="420246"/>
    <lineage>
        <taxon>Bacteria</taxon>
        <taxon>Bacillati</taxon>
        <taxon>Bacillota</taxon>
        <taxon>Bacilli</taxon>
        <taxon>Bacillales</taxon>
        <taxon>Anoxybacillaceae</taxon>
        <taxon>Geobacillus</taxon>
    </lineage>
</organism>
<keyword id="KW-0963">Cytoplasm</keyword>
<keyword id="KW-0255">Endonuclease</keyword>
<keyword id="KW-0378">Hydrolase</keyword>
<keyword id="KW-0464">Manganese</keyword>
<keyword id="KW-0479">Metal-binding</keyword>
<keyword id="KW-0540">Nuclease</keyword>
<sequence>MKQYTVKEIEALLPELEGESDPRWEMLRRDERKSVQALLARFVKQKEREKAARQRWEELMRYERELYAAGIERIAGIDEAGRGPLAGPVVAAAVILPKDAYLPGLDDSKRLTPAKREALFAQIEECAVAIGVGIVSAAEIDEWNIYEATKQAMAKAVAALSPSPEHLLVDAMTVPCALPQQRLIKGDANSASIAAASIIAKVTRDRWMHELDRRYPQYGFARHMGYGTPEHLAAIRRYGVTDEHRRSFAPVREALGVQS</sequence>
<dbReference type="EC" id="3.1.26.4" evidence="1"/>
<dbReference type="EMBL" id="CP000557">
    <property type="protein sequence ID" value="ABO66434.1"/>
    <property type="molecule type" value="Genomic_DNA"/>
</dbReference>
<dbReference type="RefSeq" id="WP_008878606.1">
    <property type="nucleotide sequence ID" value="NC_009328.1"/>
</dbReference>
<dbReference type="SMR" id="A4IM80"/>
<dbReference type="KEGG" id="gtn:GTNG_1058"/>
<dbReference type="eggNOG" id="COG0164">
    <property type="taxonomic scope" value="Bacteria"/>
</dbReference>
<dbReference type="HOGENOM" id="CLU_036532_2_1_9"/>
<dbReference type="Proteomes" id="UP000001578">
    <property type="component" value="Chromosome"/>
</dbReference>
<dbReference type="GO" id="GO:0005737">
    <property type="term" value="C:cytoplasm"/>
    <property type="evidence" value="ECO:0007669"/>
    <property type="project" value="UniProtKB-SubCell"/>
</dbReference>
<dbReference type="GO" id="GO:0032299">
    <property type="term" value="C:ribonuclease H2 complex"/>
    <property type="evidence" value="ECO:0007669"/>
    <property type="project" value="TreeGrafter"/>
</dbReference>
<dbReference type="GO" id="GO:0030145">
    <property type="term" value="F:manganese ion binding"/>
    <property type="evidence" value="ECO:0007669"/>
    <property type="project" value="UniProtKB-UniRule"/>
</dbReference>
<dbReference type="GO" id="GO:0003723">
    <property type="term" value="F:RNA binding"/>
    <property type="evidence" value="ECO:0007669"/>
    <property type="project" value="InterPro"/>
</dbReference>
<dbReference type="GO" id="GO:0004523">
    <property type="term" value="F:RNA-DNA hybrid ribonuclease activity"/>
    <property type="evidence" value="ECO:0007669"/>
    <property type="project" value="UniProtKB-UniRule"/>
</dbReference>
<dbReference type="GO" id="GO:0043137">
    <property type="term" value="P:DNA replication, removal of RNA primer"/>
    <property type="evidence" value="ECO:0007669"/>
    <property type="project" value="TreeGrafter"/>
</dbReference>
<dbReference type="GO" id="GO:0006298">
    <property type="term" value="P:mismatch repair"/>
    <property type="evidence" value="ECO:0007669"/>
    <property type="project" value="TreeGrafter"/>
</dbReference>
<dbReference type="CDD" id="cd07182">
    <property type="entry name" value="RNase_HII_bacteria_HII_like"/>
    <property type="match status" value="1"/>
</dbReference>
<dbReference type="FunFam" id="3.30.420.10:FF:000006">
    <property type="entry name" value="Ribonuclease HII"/>
    <property type="match status" value="1"/>
</dbReference>
<dbReference type="Gene3D" id="3.30.420.10">
    <property type="entry name" value="Ribonuclease H-like superfamily/Ribonuclease H"/>
    <property type="match status" value="1"/>
</dbReference>
<dbReference type="HAMAP" id="MF_00052_B">
    <property type="entry name" value="RNase_HII_B"/>
    <property type="match status" value="1"/>
</dbReference>
<dbReference type="InterPro" id="IPR022898">
    <property type="entry name" value="RNase_HII"/>
</dbReference>
<dbReference type="InterPro" id="IPR001352">
    <property type="entry name" value="RNase_HII/HIII"/>
</dbReference>
<dbReference type="InterPro" id="IPR024567">
    <property type="entry name" value="RNase_HII/HIII_dom"/>
</dbReference>
<dbReference type="InterPro" id="IPR012337">
    <property type="entry name" value="RNaseH-like_sf"/>
</dbReference>
<dbReference type="InterPro" id="IPR036397">
    <property type="entry name" value="RNaseH_sf"/>
</dbReference>
<dbReference type="NCBIfam" id="NF000594">
    <property type="entry name" value="PRK00015.1-1"/>
    <property type="match status" value="1"/>
</dbReference>
<dbReference type="NCBIfam" id="NF000595">
    <property type="entry name" value="PRK00015.1-3"/>
    <property type="match status" value="1"/>
</dbReference>
<dbReference type="PANTHER" id="PTHR10954">
    <property type="entry name" value="RIBONUCLEASE H2 SUBUNIT A"/>
    <property type="match status" value="1"/>
</dbReference>
<dbReference type="PANTHER" id="PTHR10954:SF18">
    <property type="entry name" value="RIBONUCLEASE HII"/>
    <property type="match status" value="1"/>
</dbReference>
<dbReference type="Pfam" id="PF01351">
    <property type="entry name" value="RNase_HII"/>
    <property type="match status" value="1"/>
</dbReference>
<dbReference type="SUPFAM" id="SSF53098">
    <property type="entry name" value="Ribonuclease H-like"/>
    <property type="match status" value="1"/>
</dbReference>
<dbReference type="PROSITE" id="PS51975">
    <property type="entry name" value="RNASE_H_2"/>
    <property type="match status" value="1"/>
</dbReference>
<proteinExistence type="inferred from homology"/>